<keyword id="KW-0028">Amino-acid biosynthesis</keyword>
<keyword id="KW-0963">Cytoplasm</keyword>
<keyword id="KW-0368">Histidine biosynthesis</keyword>
<keyword id="KW-0456">Lyase</keyword>
<keyword id="KW-1185">Reference proteome</keyword>
<accession>Q9HR52</accession>
<protein>
    <recommendedName>
        <fullName>Imidazole glycerol phosphate synthase subunit HisF</fullName>
        <ecNumber>4.3.2.10</ecNumber>
    </recommendedName>
    <alternativeName>
        <fullName>IGP synthase cyclase subunit</fullName>
    </alternativeName>
    <alternativeName>
        <fullName>IGP synthase subunit HisF</fullName>
    </alternativeName>
    <alternativeName>
        <fullName>ImGP synthase subunit HisF</fullName>
        <shortName>IGPS subunit HisF</shortName>
    </alternativeName>
</protein>
<reference key="1">
    <citation type="journal article" date="2000" name="Proc. Natl. Acad. Sci. U.S.A.">
        <title>Genome sequence of Halobacterium species NRC-1.</title>
        <authorList>
            <person name="Ng W.V."/>
            <person name="Kennedy S.P."/>
            <person name="Mahairas G.G."/>
            <person name="Berquist B."/>
            <person name="Pan M."/>
            <person name="Shukla H.D."/>
            <person name="Lasky S.R."/>
            <person name="Baliga N.S."/>
            <person name="Thorsson V."/>
            <person name="Sbrogna J."/>
            <person name="Swartzell S."/>
            <person name="Weir D."/>
            <person name="Hall J."/>
            <person name="Dahl T.A."/>
            <person name="Welti R."/>
            <person name="Goo Y.A."/>
            <person name="Leithauser B."/>
            <person name="Keller K."/>
            <person name="Cruz R."/>
            <person name="Danson M.J."/>
            <person name="Hough D.W."/>
            <person name="Maddocks D.G."/>
            <person name="Jablonski P.E."/>
            <person name="Krebs M.P."/>
            <person name="Angevine C.M."/>
            <person name="Dale H."/>
            <person name="Isenbarger T.A."/>
            <person name="Peck R.F."/>
            <person name="Pohlschroder M."/>
            <person name="Spudich J.L."/>
            <person name="Jung K.-H."/>
            <person name="Alam M."/>
            <person name="Freitas T."/>
            <person name="Hou S."/>
            <person name="Daniels C.J."/>
            <person name="Dennis P.P."/>
            <person name="Omer A.D."/>
            <person name="Ebhardt H."/>
            <person name="Lowe T.M."/>
            <person name="Liang P."/>
            <person name="Riley M."/>
            <person name="Hood L."/>
            <person name="DasSarma S."/>
        </authorList>
    </citation>
    <scope>NUCLEOTIDE SEQUENCE [LARGE SCALE GENOMIC DNA]</scope>
    <source>
        <strain>ATCC 700922 / JCM 11081 / NRC-1</strain>
    </source>
</reference>
<gene>
    <name type="primary">hisF</name>
    <name type="ordered locus">VNG_0862G</name>
</gene>
<name>HIS6_HALSA</name>
<proteinExistence type="inferred from homology"/>
<feature type="chain" id="PRO_0000142277" description="Imidazole glycerol phosphate synthase subunit HisF">
    <location>
        <begin position="1"/>
        <end position="273"/>
    </location>
</feature>
<feature type="active site" evidence="2">
    <location>
        <position position="12"/>
    </location>
</feature>
<feature type="active site" evidence="2">
    <location>
        <position position="136"/>
    </location>
</feature>
<evidence type="ECO:0000250" key="1"/>
<evidence type="ECO:0000255" key="2"/>
<evidence type="ECO:0000305" key="3"/>
<dbReference type="EC" id="4.3.2.10"/>
<dbReference type="EMBL" id="AE004437">
    <property type="protein sequence ID" value="AAG19306.1"/>
    <property type="molecule type" value="Genomic_DNA"/>
</dbReference>
<dbReference type="PIR" id="F84242">
    <property type="entry name" value="F84242"/>
</dbReference>
<dbReference type="RefSeq" id="WP_010902602.1">
    <property type="nucleotide sequence ID" value="NC_002607.1"/>
</dbReference>
<dbReference type="SMR" id="Q9HR52"/>
<dbReference type="FunCoup" id="Q9HR52">
    <property type="interactions" value="168"/>
</dbReference>
<dbReference type="STRING" id="64091.VNG_0862G"/>
<dbReference type="PaxDb" id="64091-VNG_0862G"/>
<dbReference type="GeneID" id="89349278"/>
<dbReference type="KEGG" id="hal:VNG_0862G"/>
<dbReference type="PATRIC" id="fig|64091.14.peg.658"/>
<dbReference type="HOGENOM" id="CLU_048577_4_0_2"/>
<dbReference type="InParanoid" id="Q9HR52"/>
<dbReference type="OrthoDB" id="6261at2157"/>
<dbReference type="PhylomeDB" id="Q9HR52"/>
<dbReference type="UniPathway" id="UPA00031">
    <property type="reaction ID" value="UER00010"/>
</dbReference>
<dbReference type="Proteomes" id="UP000000554">
    <property type="component" value="Chromosome"/>
</dbReference>
<dbReference type="GO" id="GO:0005737">
    <property type="term" value="C:cytoplasm"/>
    <property type="evidence" value="ECO:0007669"/>
    <property type="project" value="UniProtKB-SubCell"/>
</dbReference>
<dbReference type="GO" id="GO:0000107">
    <property type="term" value="F:imidazoleglycerol-phosphate synthase activity"/>
    <property type="evidence" value="ECO:0000318"/>
    <property type="project" value="GO_Central"/>
</dbReference>
<dbReference type="GO" id="GO:0016829">
    <property type="term" value="F:lyase activity"/>
    <property type="evidence" value="ECO:0007669"/>
    <property type="project" value="UniProtKB-KW"/>
</dbReference>
<dbReference type="GO" id="GO:0000105">
    <property type="term" value="P:L-histidine biosynthetic process"/>
    <property type="evidence" value="ECO:0007669"/>
    <property type="project" value="UniProtKB-UniRule"/>
</dbReference>
<dbReference type="CDD" id="cd04731">
    <property type="entry name" value="HisF"/>
    <property type="match status" value="1"/>
</dbReference>
<dbReference type="Gene3D" id="3.20.20.70">
    <property type="entry name" value="Aldolase class I"/>
    <property type="match status" value="1"/>
</dbReference>
<dbReference type="HAMAP" id="MF_01013">
    <property type="entry name" value="HisF"/>
    <property type="match status" value="1"/>
</dbReference>
<dbReference type="InterPro" id="IPR013785">
    <property type="entry name" value="Aldolase_TIM"/>
</dbReference>
<dbReference type="InterPro" id="IPR006062">
    <property type="entry name" value="His_biosynth"/>
</dbReference>
<dbReference type="InterPro" id="IPR004651">
    <property type="entry name" value="HisF"/>
</dbReference>
<dbReference type="InterPro" id="IPR050064">
    <property type="entry name" value="IGPS_HisA/HisF"/>
</dbReference>
<dbReference type="InterPro" id="IPR011060">
    <property type="entry name" value="RibuloseP-bd_barrel"/>
</dbReference>
<dbReference type="NCBIfam" id="TIGR00735">
    <property type="entry name" value="hisF"/>
    <property type="match status" value="1"/>
</dbReference>
<dbReference type="PANTHER" id="PTHR21235:SF2">
    <property type="entry name" value="IMIDAZOLE GLYCEROL PHOSPHATE SYNTHASE HISHF"/>
    <property type="match status" value="1"/>
</dbReference>
<dbReference type="PANTHER" id="PTHR21235">
    <property type="entry name" value="IMIDAZOLE GLYCEROL PHOSPHATE SYNTHASE SUBUNIT HISF/H IGP SYNTHASE SUBUNIT HISF/H"/>
    <property type="match status" value="1"/>
</dbReference>
<dbReference type="Pfam" id="PF00977">
    <property type="entry name" value="His_biosynth"/>
    <property type="match status" value="1"/>
</dbReference>
<dbReference type="SUPFAM" id="SSF51366">
    <property type="entry name" value="Ribulose-phoshate binding barrel"/>
    <property type="match status" value="1"/>
</dbReference>
<organism>
    <name type="scientific">Halobacterium salinarum (strain ATCC 700922 / JCM 11081 / NRC-1)</name>
    <name type="common">Halobacterium halobium</name>
    <dbReference type="NCBI Taxonomy" id="64091"/>
    <lineage>
        <taxon>Archaea</taxon>
        <taxon>Methanobacteriati</taxon>
        <taxon>Methanobacteriota</taxon>
        <taxon>Stenosarchaea group</taxon>
        <taxon>Halobacteria</taxon>
        <taxon>Halobacteriales</taxon>
        <taxon>Halobacteriaceae</taxon>
        <taxon>Halobacterium</taxon>
        <taxon>Halobacterium salinarum NRC-34001</taxon>
    </lineage>
</organism>
<comment type="function">
    <text evidence="1">IGPS catalyzes the conversion of PRFAR and glutamine to IGP, AICAR and glutamate. The HisF subunit catalyzes the cyclization activity that produces IGP and AICAR from PRFAR using the ammonia provided by the HisH subunit (By similarity).</text>
</comment>
<comment type="catalytic activity">
    <reaction>
        <text>5-[(5-phospho-1-deoxy-D-ribulos-1-ylimino)methylamino]-1-(5-phospho-beta-D-ribosyl)imidazole-4-carboxamide + L-glutamine = D-erythro-1-(imidazol-4-yl)glycerol 3-phosphate + 5-amino-1-(5-phospho-beta-D-ribosyl)imidazole-4-carboxamide + L-glutamate + H(+)</text>
        <dbReference type="Rhea" id="RHEA:24793"/>
        <dbReference type="ChEBI" id="CHEBI:15378"/>
        <dbReference type="ChEBI" id="CHEBI:29985"/>
        <dbReference type="ChEBI" id="CHEBI:58278"/>
        <dbReference type="ChEBI" id="CHEBI:58359"/>
        <dbReference type="ChEBI" id="CHEBI:58475"/>
        <dbReference type="ChEBI" id="CHEBI:58525"/>
        <dbReference type="EC" id="4.3.2.10"/>
    </reaction>
</comment>
<comment type="pathway">
    <text>Amino-acid biosynthesis; L-histidine biosynthesis; L-histidine from 5-phospho-alpha-D-ribose 1-diphosphate: step 5/9.</text>
</comment>
<comment type="subunit">
    <text evidence="1">Heterodimer of HisH and HisF.</text>
</comment>
<comment type="subcellular location">
    <subcellularLocation>
        <location evidence="1">Cytoplasm</location>
    </subcellularLocation>
</comment>
<comment type="similarity">
    <text evidence="3">Belongs to the HisA/HisF family.</text>
</comment>
<sequence>MTLTKRVIPCIDVDLDDDGEPAVYTGVNFEELAYTGDPVEMAKRYNEAGADEFVFLDITASAEGRETMLDTVSAVADEVFIPLTVGGGIRDTDDIRETLRAGADKVSINSGAIADPSLVDRGAKAFGSQCIVISVDARRRFDEQGQHYTQVDGESCWFECTVHGGREGTGMDAIEWVQEAQRRGAGELFVNSIDADGTQDGYDVPLTAAVCDAVSTPVIASSGCGAPGDMADAYDAGADAALAASIFHFDEYSIAETKETLADAGYPIRAPDA</sequence>